<dbReference type="EC" id="3.1.2.-"/>
<dbReference type="EMBL" id="AE001439">
    <property type="protein sequence ID" value="AAD06026.1"/>
    <property type="molecule type" value="Genomic_DNA"/>
</dbReference>
<dbReference type="PIR" id="E71930">
    <property type="entry name" value="E71930"/>
</dbReference>
<dbReference type="RefSeq" id="WP_001203800.1">
    <property type="nucleotide sequence ID" value="NZ_CP011330.1"/>
</dbReference>
<dbReference type="SMR" id="Q9ZLX8"/>
<dbReference type="KEGG" id="hpj:jhp_0448"/>
<dbReference type="PATRIC" id="fig|85963.30.peg.557"/>
<dbReference type="eggNOG" id="COG0824">
    <property type="taxonomic scope" value="Bacteria"/>
</dbReference>
<dbReference type="Proteomes" id="UP000000804">
    <property type="component" value="Chromosome"/>
</dbReference>
<dbReference type="GO" id="GO:0047617">
    <property type="term" value="F:fatty acyl-CoA hydrolase activity"/>
    <property type="evidence" value="ECO:0007669"/>
    <property type="project" value="TreeGrafter"/>
</dbReference>
<dbReference type="GO" id="GO:0006629">
    <property type="term" value="P:lipid metabolic process"/>
    <property type="evidence" value="ECO:0007669"/>
    <property type="project" value="UniProtKB-KW"/>
</dbReference>
<dbReference type="CDD" id="cd00586">
    <property type="entry name" value="4HBT"/>
    <property type="match status" value="1"/>
</dbReference>
<dbReference type="FunFam" id="3.10.129.10:FF:000054">
    <property type="entry name" value="Putative tol-pal system-associated acyl-CoA thioesterase"/>
    <property type="match status" value="1"/>
</dbReference>
<dbReference type="Gene3D" id="3.10.129.10">
    <property type="entry name" value="Hotdog Thioesterase"/>
    <property type="match status" value="1"/>
</dbReference>
<dbReference type="InterPro" id="IPR050563">
    <property type="entry name" value="4-hydroxybenzoyl-CoA_TE"/>
</dbReference>
<dbReference type="InterPro" id="IPR008272">
    <property type="entry name" value="HB-CoA_thioesterase_AS"/>
</dbReference>
<dbReference type="InterPro" id="IPR029069">
    <property type="entry name" value="HotDog_dom_sf"/>
</dbReference>
<dbReference type="InterPro" id="IPR006683">
    <property type="entry name" value="Thioestr_dom"/>
</dbReference>
<dbReference type="InterPro" id="IPR006684">
    <property type="entry name" value="YbgC/YbaW"/>
</dbReference>
<dbReference type="NCBIfam" id="TIGR00051">
    <property type="entry name" value="YbgC/FadM family acyl-CoA thioesterase"/>
    <property type="match status" value="1"/>
</dbReference>
<dbReference type="PANTHER" id="PTHR31793">
    <property type="entry name" value="4-HYDROXYBENZOYL-COA THIOESTERASE FAMILY MEMBER"/>
    <property type="match status" value="1"/>
</dbReference>
<dbReference type="PANTHER" id="PTHR31793:SF37">
    <property type="entry name" value="ACYL-COA THIOESTER HYDROLASE YBGC"/>
    <property type="match status" value="1"/>
</dbReference>
<dbReference type="Pfam" id="PF03061">
    <property type="entry name" value="4HBT"/>
    <property type="match status" value="1"/>
</dbReference>
<dbReference type="PIRSF" id="PIRSF003230">
    <property type="entry name" value="YbgC"/>
    <property type="match status" value="1"/>
</dbReference>
<dbReference type="SUPFAM" id="SSF54637">
    <property type="entry name" value="Thioesterase/thiol ester dehydrase-isomerase"/>
    <property type="match status" value="1"/>
</dbReference>
<dbReference type="PROSITE" id="PS01328">
    <property type="entry name" value="4HBCOA_THIOESTERASE"/>
    <property type="match status" value="1"/>
</dbReference>
<reference key="1">
    <citation type="journal article" date="1999" name="Nature">
        <title>Genomic sequence comparison of two unrelated isolates of the human gastric pathogen Helicobacter pylori.</title>
        <authorList>
            <person name="Alm R.A."/>
            <person name="Ling L.-S.L."/>
            <person name="Moir D.T."/>
            <person name="King B.L."/>
            <person name="Brown E.D."/>
            <person name="Doig P.C."/>
            <person name="Smith D.R."/>
            <person name="Noonan B."/>
            <person name="Guild B.C."/>
            <person name="deJonge B.L."/>
            <person name="Carmel G."/>
            <person name="Tummino P.J."/>
            <person name="Caruso A."/>
            <person name="Uria-Nickelsen M."/>
            <person name="Mills D.M."/>
            <person name="Ives C."/>
            <person name="Gibson R."/>
            <person name="Merberg D."/>
            <person name="Mills S.D."/>
            <person name="Jiang Q."/>
            <person name="Taylor D.E."/>
            <person name="Vovis G.F."/>
            <person name="Trust T.J."/>
        </authorList>
    </citation>
    <scope>NUCLEOTIDE SEQUENCE [LARGE SCALE GENOMIC DNA]</scope>
    <source>
        <strain>J99 / ATCC 700824</strain>
    </source>
</reference>
<gene>
    <name type="primary">ybgC</name>
    <name type="ordered locus">jhp_0448</name>
</gene>
<proteinExistence type="inferred from homology"/>
<evidence type="ECO:0000250" key="1"/>
<evidence type="ECO:0000255" key="2">
    <source>
        <dbReference type="PROSITE-ProRule" id="PRU10041"/>
    </source>
</evidence>
<evidence type="ECO:0000305" key="3"/>
<accession>Q9ZLX8</accession>
<comment type="function">
    <text evidence="1">Thioesterase that may be involved in phospholipid metabolism. Displays acyl-CoA thioesterase activity with lauroyl-CoA (C12:0), myristoyl-CoA (C14:0), palmitoyl-CoA (C16:0), stearoyl-CoA (C18:0) and benzoyl-CoA, catalyzing the hydrolysis of the thioester bond. Has low activity with butyryl-CoA and octanoyl-CoA (By similarity).</text>
</comment>
<comment type="subunit">
    <text evidence="1">Homotetramer. May interact with CagA (By similarity).</text>
</comment>
<comment type="similarity">
    <text evidence="3">Belongs to the 4-hydroxybenzoyl-CoA thioesterase family.</text>
</comment>
<name>YBGC_HELPJ</name>
<sequence>MRCRVYYEDTDSEGVVYHANYLKYCERARSEFFFKQNVLPENEEGVFVIRSIKADFFTPASLGQVLEIRTQIKELRKVFVVLFQEIYCIQNASLEPMKPFKVFASEIKFGFVNRSTYSPIAIPKLFKELLSAV</sequence>
<protein>
    <recommendedName>
        <fullName>Acyl-CoA thioesterase YbgC</fullName>
        <ecNumber>3.1.2.-</ecNumber>
    </recommendedName>
</protein>
<feature type="chain" id="PRO_0000087768" description="Acyl-CoA thioesterase YbgC">
    <location>
        <begin position="1"/>
        <end position="133"/>
    </location>
</feature>
<feature type="active site" evidence="2">
    <location>
        <position position="11"/>
    </location>
</feature>
<organism>
    <name type="scientific">Helicobacter pylori (strain J99 / ATCC 700824)</name>
    <name type="common">Campylobacter pylori J99</name>
    <dbReference type="NCBI Taxonomy" id="85963"/>
    <lineage>
        <taxon>Bacteria</taxon>
        <taxon>Pseudomonadati</taxon>
        <taxon>Campylobacterota</taxon>
        <taxon>Epsilonproteobacteria</taxon>
        <taxon>Campylobacterales</taxon>
        <taxon>Helicobacteraceae</taxon>
        <taxon>Helicobacter</taxon>
    </lineage>
</organism>
<keyword id="KW-0378">Hydrolase</keyword>
<keyword id="KW-0443">Lipid metabolism</keyword>